<name>NDUS2_NYCOV</name>
<proteinExistence type="inferred from homology"/>
<organism>
    <name type="scientific">Nyctotherus ovalis</name>
    <dbReference type="NCBI Taxonomy" id="70075"/>
    <lineage>
        <taxon>Eukaryota</taxon>
        <taxon>Sar</taxon>
        <taxon>Alveolata</taxon>
        <taxon>Ciliophora</taxon>
        <taxon>Intramacronucleata</taxon>
        <taxon>Armophorea</taxon>
        <taxon>Clevelandellida</taxon>
        <taxon>Nyctotheridae</taxon>
        <taxon>Nyctotherus</taxon>
    </lineage>
</organism>
<sequence length="412" mass="46974">MMRSSSLQKNIMLLRVGSKDSTRFRILILNFGPQHPASHGVLRLVIVIIGEVVTKLDPHIGFLHRGTERLVEEHSYMNAAVFMDRLDYTTVLTQTHAYCLAVEQALAKSRLCIRTQLLRTIFDELSRILNHLLSIATHALDIGTMAMLFWAFEDRERIMELYEYISGARMHTALYYPNQTLDHILTNELLAKILIFSRNSEKTYTEIYIALYNNRVWRLRLCGIGVVSTEISTSTTISGPVARSTGLQLDMRSGENYQYGYYASLTLRIFLGISGDSFDRFIIRLRELFESTRLIYNSLIELSAYINISVYNMCSYSNNPHLKIESLIELFRYSLGEYLLNISLVSGFVESGKGIFGIMLAANNTNRPYRLYIRSPAYMHLQLLPKLGAGHHIADLATLLGSIDVVFGEVDR</sequence>
<geneLocation type="hydrogenosome"/>
<reference key="1">
    <citation type="journal article" date="2005" name="Nature">
        <title>An anaerobic mitochondrion that produces hydrogen.</title>
        <authorList>
            <person name="Boxma B."/>
            <person name="de Graaf R.M."/>
            <person name="van der Staay G.W.M."/>
            <person name="van Alen T.A."/>
            <person name="Ricard G."/>
            <person name="Gabaldon T."/>
            <person name="van Hoek A.H.A.M."/>
            <person name="Moon-van der Staay S.Y."/>
            <person name="Koopman W.J.H."/>
            <person name="van Hellemond J.J."/>
            <person name="Tielens A.G.M."/>
            <person name="Friedrich T."/>
            <person name="Veenhuis M."/>
            <person name="Huynen M.A."/>
            <person name="Hackstein J.H.P."/>
        </authorList>
    </citation>
    <scope>NUCLEOTIDE SEQUENCE [LARGE SCALE GENOMIC DNA]</scope>
</reference>
<accession>Q5DUX5</accession>
<keyword id="KW-0377">Hydrogenosome</keyword>
<keyword id="KW-0520">NAD</keyword>
<keyword id="KW-0560">Oxidoreductase</keyword>
<keyword id="KW-1278">Translocase</keyword>
<keyword id="KW-0830">Ubiquinone</keyword>
<protein>
    <recommendedName>
        <fullName>NADH-ubiquinone oxidoreductase 49 kDa subunit</fullName>
        <ecNumber>7.1.1.2</ecNumber>
    </recommendedName>
    <alternativeName>
        <fullName>NADH dehydrogenase subunit 7</fullName>
    </alternativeName>
</protein>
<gene>
    <name type="primary">nad7</name>
</gene>
<dbReference type="EC" id="7.1.1.2"/>
<dbReference type="EMBL" id="AJ871267">
    <property type="protein sequence ID" value="CAI38863.1"/>
    <property type="molecule type" value="Genomic_DNA"/>
</dbReference>
<dbReference type="SMR" id="Q5DUX5"/>
<dbReference type="GO" id="GO:0042566">
    <property type="term" value="C:hydrogenosome"/>
    <property type="evidence" value="ECO:0007669"/>
    <property type="project" value="UniProtKB-SubCell"/>
</dbReference>
<dbReference type="GO" id="GO:0051287">
    <property type="term" value="F:NAD binding"/>
    <property type="evidence" value="ECO:0007669"/>
    <property type="project" value="InterPro"/>
</dbReference>
<dbReference type="GO" id="GO:0008137">
    <property type="term" value="F:NADH dehydrogenase (ubiquinone) activity"/>
    <property type="evidence" value="ECO:0007669"/>
    <property type="project" value="UniProtKB-EC"/>
</dbReference>
<dbReference type="GO" id="GO:0048038">
    <property type="term" value="F:quinone binding"/>
    <property type="evidence" value="ECO:0007669"/>
    <property type="project" value="InterPro"/>
</dbReference>
<dbReference type="Gene3D" id="1.10.645.10">
    <property type="entry name" value="Cytochrome-c3 Hydrogenase, chain B"/>
    <property type="match status" value="1"/>
</dbReference>
<dbReference type="InterPro" id="IPR001135">
    <property type="entry name" value="NADH_Q_OxRdtase_suD"/>
</dbReference>
<dbReference type="InterPro" id="IPR022885">
    <property type="entry name" value="NDH1_su_D/H"/>
</dbReference>
<dbReference type="InterPro" id="IPR029014">
    <property type="entry name" value="NiFe-Hase_large"/>
</dbReference>
<dbReference type="PANTHER" id="PTHR11993:SF10">
    <property type="entry name" value="NADH DEHYDROGENASE [UBIQUINONE] IRON-SULFUR PROTEIN 2, MITOCHONDRIAL"/>
    <property type="match status" value="1"/>
</dbReference>
<dbReference type="PANTHER" id="PTHR11993">
    <property type="entry name" value="NADH-UBIQUINONE OXIDOREDUCTASE 49 KDA SUBUNIT"/>
    <property type="match status" value="1"/>
</dbReference>
<dbReference type="Pfam" id="PF00346">
    <property type="entry name" value="Complex1_49kDa"/>
    <property type="match status" value="1"/>
</dbReference>
<dbReference type="SUPFAM" id="SSF56762">
    <property type="entry name" value="HydB/Nqo4-like"/>
    <property type="match status" value="1"/>
</dbReference>
<comment type="function">
    <text>Transfer of electrons from NADH to the respiratory chain. The immediate electron acceptor for the enzyme is believed to be ubiquinone. Component of the iron-sulfur (IP) fragment of the enzyme.</text>
</comment>
<comment type="catalytic activity">
    <reaction>
        <text>a ubiquinone + NADH + 5 H(+)(in) = a ubiquinol + NAD(+) + 4 H(+)(out)</text>
        <dbReference type="Rhea" id="RHEA:29091"/>
        <dbReference type="Rhea" id="RHEA-COMP:9565"/>
        <dbReference type="Rhea" id="RHEA-COMP:9566"/>
        <dbReference type="ChEBI" id="CHEBI:15378"/>
        <dbReference type="ChEBI" id="CHEBI:16389"/>
        <dbReference type="ChEBI" id="CHEBI:17976"/>
        <dbReference type="ChEBI" id="CHEBI:57540"/>
        <dbReference type="ChEBI" id="CHEBI:57945"/>
        <dbReference type="EC" id="7.1.1.2"/>
    </reaction>
</comment>
<comment type="subcellular location">
    <subcellularLocation>
        <location>Hydrogenosome</location>
    </subcellularLocation>
</comment>
<comment type="similarity">
    <text evidence="1">Belongs to the complex I 49 kDa subunit family.</text>
</comment>
<evidence type="ECO:0000305" key="1"/>
<feature type="chain" id="PRO_0000118595" description="NADH-ubiquinone oxidoreductase 49 kDa subunit">
    <location>
        <begin position="1"/>
        <end position="412"/>
    </location>
</feature>